<reference key="1">
    <citation type="journal article" date="2002" name="Proc. Natl. Acad. Sci. U.S.A.">
        <title>Genome sequence of a serotype M3 strain of group A Streptococcus: phage-encoded toxins, the high-virulence phenotype, and clone emergence.</title>
        <authorList>
            <person name="Beres S.B."/>
            <person name="Sylva G.L."/>
            <person name="Barbian K.D."/>
            <person name="Lei B."/>
            <person name="Hoff J.S."/>
            <person name="Mammarella N.D."/>
            <person name="Liu M.-Y."/>
            <person name="Smoot J.C."/>
            <person name="Porcella S.F."/>
            <person name="Parkins L.D."/>
            <person name="Campbell D.S."/>
            <person name="Smith T.M."/>
            <person name="McCormick J.K."/>
            <person name="Leung D.Y.M."/>
            <person name="Schlievert P.M."/>
            <person name="Musser J.M."/>
        </authorList>
    </citation>
    <scope>NUCLEOTIDE SEQUENCE [LARGE SCALE GENOMIC DNA]</scope>
    <source>
        <strain>ATCC BAA-595 / MGAS315</strain>
    </source>
</reference>
<accession>P0DF80</accession>
<accession>Q8K8C6</accession>
<gene>
    <name evidence="1" type="primary">smpB</name>
    <name type="ordered locus">SpyM3_0353</name>
</gene>
<name>SSRP_STRP3</name>
<keyword id="KW-0963">Cytoplasm</keyword>
<keyword id="KW-0694">RNA-binding</keyword>
<dbReference type="EMBL" id="AE014074">
    <property type="protein sequence ID" value="AAM78960.1"/>
    <property type="molecule type" value="Genomic_DNA"/>
</dbReference>
<dbReference type="RefSeq" id="WP_011054260.1">
    <property type="nucleotide sequence ID" value="NC_004070.1"/>
</dbReference>
<dbReference type="SMR" id="P0DF80"/>
<dbReference type="KEGG" id="spg:SpyM3_0353"/>
<dbReference type="HOGENOM" id="CLU_108953_0_0_9"/>
<dbReference type="Proteomes" id="UP000000564">
    <property type="component" value="Chromosome"/>
</dbReference>
<dbReference type="GO" id="GO:0005829">
    <property type="term" value="C:cytosol"/>
    <property type="evidence" value="ECO:0007669"/>
    <property type="project" value="TreeGrafter"/>
</dbReference>
<dbReference type="GO" id="GO:0003723">
    <property type="term" value="F:RNA binding"/>
    <property type="evidence" value="ECO:0007669"/>
    <property type="project" value="UniProtKB-UniRule"/>
</dbReference>
<dbReference type="GO" id="GO:0070929">
    <property type="term" value="P:trans-translation"/>
    <property type="evidence" value="ECO:0007669"/>
    <property type="project" value="UniProtKB-UniRule"/>
</dbReference>
<dbReference type="CDD" id="cd09294">
    <property type="entry name" value="SmpB"/>
    <property type="match status" value="1"/>
</dbReference>
<dbReference type="Gene3D" id="2.40.280.10">
    <property type="match status" value="1"/>
</dbReference>
<dbReference type="HAMAP" id="MF_00023">
    <property type="entry name" value="SmpB"/>
    <property type="match status" value="1"/>
</dbReference>
<dbReference type="InterPro" id="IPR023620">
    <property type="entry name" value="SmpB"/>
</dbReference>
<dbReference type="InterPro" id="IPR000037">
    <property type="entry name" value="SsrA-bd_prot"/>
</dbReference>
<dbReference type="InterPro" id="IPR020081">
    <property type="entry name" value="SsrA-bd_prot_CS"/>
</dbReference>
<dbReference type="NCBIfam" id="NF003843">
    <property type="entry name" value="PRK05422.1"/>
    <property type="match status" value="1"/>
</dbReference>
<dbReference type="NCBIfam" id="TIGR00086">
    <property type="entry name" value="smpB"/>
    <property type="match status" value="1"/>
</dbReference>
<dbReference type="PANTHER" id="PTHR30308:SF2">
    <property type="entry name" value="SSRA-BINDING PROTEIN"/>
    <property type="match status" value="1"/>
</dbReference>
<dbReference type="PANTHER" id="PTHR30308">
    <property type="entry name" value="TMRNA-BINDING COMPONENT OF TRANS-TRANSLATION TAGGING COMPLEX"/>
    <property type="match status" value="1"/>
</dbReference>
<dbReference type="Pfam" id="PF01668">
    <property type="entry name" value="SmpB"/>
    <property type="match status" value="1"/>
</dbReference>
<dbReference type="SUPFAM" id="SSF74982">
    <property type="entry name" value="Small protein B (SmpB)"/>
    <property type="match status" value="1"/>
</dbReference>
<dbReference type="PROSITE" id="PS01317">
    <property type="entry name" value="SSRP"/>
    <property type="match status" value="1"/>
</dbReference>
<evidence type="ECO:0000255" key="1">
    <source>
        <dbReference type="HAMAP-Rule" id="MF_00023"/>
    </source>
</evidence>
<evidence type="ECO:0000256" key="2">
    <source>
        <dbReference type="SAM" id="MobiDB-lite"/>
    </source>
</evidence>
<proteinExistence type="inferred from homology"/>
<protein>
    <recommendedName>
        <fullName evidence="1">SsrA-binding protein</fullName>
    </recommendedName>
    <alternativeName>
        <fullName evidence="1">Small protein B</fullName>
    </alternativeName>
</protein>
<feature type="chain" id="PRO_0000103044" description="SsrA-binding protein">
    <location>
        <begin position="1"/>
        <end position="155"/>
    </location>
</feature>
<feature type="region of interest" description="Disordered" evidence="2">
    <location>
        <begin position="135"/>
        <end position="155"/>
    </location>
</feature>
<feature type="compositionally biased region" description="Basic and acidic residues" evidence="2">
    <location>
        <begin position="135"/>
        <end position="147"/>
    </location>
</feature>
<sequence length="155" mass="17788">MAKGEGHILAQNKKARHDYHIVETVEAGIVLTGTEIKSVRAARIQLKDGFAQIKNGEAWLVNVHIAPFEQGNIWNADPERTRKLLLKKREITHLENELKGSGMTLVPLKVYLKDGFAKVLIGLAKGKHEYDKRETIKRRDQERDIKKQMKHYNAR</sequence>
<comment type="function">
    <text evidence="1">Required for rescue of stalled ribosomes mediated by trans-translation. Binds to transfer-messenger RNA (tmRNA), required for stable association of tmRNA with ribosomes. tmRNA and SmpB together mimic tRNA shape, replacing the anticodon stem-loop with SmpB. tmRNA is encoded by the ssrA gene; the 2 termini fold to resemble tRNA(Ala) and it encodes a 'tag peptide', a short internal open reading frame. During trans-translation Ala-aminoacylated tmRNA acts like a tRNA, entering the A-site of stalled ribosomes, displacing the stalled mRNA. The ribosome then switches to translate the ORF on the tmRNA; the nascent peptide is terminated with the 'tag peptide' encoded by the tmRNA and targeted for degradation. The ribosome is freed to recommence translation, which seems to be the essential function of trans-translation.</text>
</comment>
<comment type="subcellular location">
    <subcellularLocation>
        <location evidence="1">Cytoplasm</location>
    </subcellularLocation>
    <text evidence="1">The tmRNA-SmpB complex associates with stalled 70S ribosomes.</text>
</comment>
<comment type="similarity">
    <text evidence="1">Belongs to the SmpB family.</text>
</comment>
<organism>
    <name type="scientific">Streptococcus pyogenes serotype M3 (strain ATCC BAA-595 / MGAS315)</name>
    <dbReference type="NCBI Taxonomy" id="198466"/>
    <lineage>
        <taxon>Bacteria</taxon>
        <taxon>Bacillati</taxon>
        <taxon>Bacillota</taxon>
        <taxon>Bacilli</taxon>
        <taxon>Lactobacillales</taxon>
        <taxon>Streptococcaceae</taxon>
        <taxon>Streptococcus</taxon>
    </lineage>
</organism>